<accession>Q8SPH9</accession>
<sequence length="407" mass="45931">MANEYKKILLLKGLELMDEYHFIIIKSLLAYDLGLTTKMQEEYNRIKISDLMEKKFQGVACVDKLIELAKDMPPLKNLVNNLRKERSKVARKMKAQGVVLMKKINQEEVGLVAPAPTARNTLTSEVGERIPVAQKRKTLSKGKTEAKRIKVPQEQSEPPHPSGASTSAATDHPPLPHTSSSTPSNTSFAQNQQTQAQCQVDTRRNVPQKDPVTVMVLKATAPFKYESPEHGKSTMFHATVASKTQYFHVKVFDISLKEKFIRKKVITISDYSECKGVMEIKEASSVSDFDQNFEVPNRIIEIANKTPKISQLYKQASGTMVYGLFMVQKKSIHKKNTIYEIKDNTGSMDVVGNGKWHNIKCEKGDKLRLFCFQLRTVNRKLKLVCGSHSFIKVIKAKKNKEGSMNVN</sequence>
<dbReference type="EMBL" id="AB072022">
    <property type="protein sequence ID" value="BAB86811.1"/>
    <property type="molecule type" value="mRNA"/>
</dbReference>
<dbReference type="RefSeq" id="NP_001272183.1">
    <property type="nucleotide sequence ID" value="NM_001285254.1"/>
</dbReference>
<dbReference type="SMR" id="Q8SPH9"/>
<dbReference type="STRING" id="9541.ENSMFAP00000020850"/>
<dbReference type="eggNOG" id="ENOG502QTQS">
    <property type="taxonomic scope" value="Eukaryota"/>
</dbReference>
<dbReference type="Proteomes" id="UP000233100">
    <property type="component" value="Unplaced"/>
</dbReference>
<dbReference type="GO" id="GO:0005829">
    <property type="term" value="C:cytosol"/>
    <property type="evidence" value="ECO:0007669"/>
    <property type="project" value="TreeGrafter"/>
</dbReference>
<dbReference type="GO" id="GO:0005730">
    <property type="term" value="C:nucleolus"/>
    <property type="evidence" value="ECO:0007669"/>
    <property type="project" value="TreeGrafter"/>
</dbReference>
<dbReference type="GO" id="GO:0005654">
    <property type="term" value="C:nucleoplasm"/>
    <property type="evidence" value="ECO:0007669"/>
    <property type="project" value="TreeGrafter"/>
</dbReference>
<dbReference type="GO" id="GO:0003690">
    <property type="term" value="F:double-stranded DNA binding"/>
    <property type="evidence" value="ECO:0007669"/>
    <property type="project" value="TreeGrafter"/>
</dbReference>
<dbReference type="GO" id="GO:0002218">
    <property type="term" value="P:activation of innate immune response"/>
    <property type="evidence" value="ECO:0007669"/>
    <property type="project" value="InterPro"/>
</dbReference>
<dbReference type="GO" id="GO:0035458">
    <property type="term" value="P:cellular response to interferon-beta"/>
    <property type="evidence" value="ECO:0007669"/>
    <property type="project" value="InterPro"/>
</dbReference>
<dbReference type="CDD" id="cd08305">
    <property type="entry name" value="Pyrin"/>
    <property type="match status" value="1"/>
</dbReference>
<dbReference type="FunFam" id="1.10.533.10:FF:000011">
    <property type="entry name" value="Myeloid cell nuclear differentiation antigen"/>
    <property type="match status" value="1"/>
</dbReference>
<dbReference type="FunFam" id="2.40.50.140:FF:000101">
    <property type="entry name" value="Myeloid cell nuclear differentiation antigen"/>
    <property type="match status" value="1"/>
</dbReference>
<dbReference type="FunFam" id="2.40.50.140:FF:000105">
    <property type="entry name" value="Myeloid cell nuclear differentiation antigen"/>
    <property type="match status" value="1"/>
</dbReference>
<dbReference type="Gene3D" id="1.10.533.10">
    <property type="entry name" value="Death Domain, Fas"/>
    <property type="match status" value="1"/>
</dbReference>
<dbReference type="Gene3D" id="2.40.50.140">
    <property type="entry name" value="Nucleic acid-binding proteins"/>
    <property type="match status" value="2"/>
</dbReference>
<dbReference type="InterPro" id="IPR004020">
    <property type="entry name" value="DAPIN"/>
</dbReference>
<dbReference type="InterPro" id="IPR011029">
    <property type="entry name" value="DEATH-like_dom_sf"/>
</dbReference>
<dbReference type="InterPro" id="IPR040205">
    <property type="entry name" value="HIN-200"/>
</dbReference>
<dbReference type="InterPro" id="IPR004021">
    <property type="entry name" value="HIN200/IF120x"/>
</dbReference>
<dbReference type="InterPro" id="IPR012340">
    <property type="entry name" value="NA-bd_OB-fold"/>
</dbReference>
<dbReference type="PANTHER" id="PTHR12200">
    <property type="entry name" value="INTERFERON-INDUCIBLE PROTEIN AIM2 FAMILY MEMBER"/>
    <property type="match status" value="1"/>
</dbReference>
<dbReference type="PANTHER" id="PTHR12200:SF27">
    <property type="entry name" value="MYELOID CELL NUCLEAR DIFFERENTIATION ANTIGEN"/>
    <property type="match status" value="1"/>
</dbReference>
<dbReference type="Pfam" id="PF02760">
    <property type="entry name" value="HIN"/>
    <property type="match status" value="1"/>
</dbReference>
<dbReference type="Pfam" id="PF02758">
    <property type="entry name" value="PYRIN"/>
    <property type="match status" value="1"/>
</dbReference>
<dbReference type="SMART" id="SM01289">
    <property type="entry name" value="PYRIN"/>
    <property type="match status" value="1"/>
</dbReference>
<dbReference type="SUPFAM" id="SSF159141">
    <property type="entry name" value="HIN-2000 domain-like"/>
    <property type="match status" value="2"/>
</dbReference>
<dbReference type="PROSITE" id="PS50824">
    <property type="entry name" value="DAPIN"/>
    <property type="match status" value="1"/>
</dbReference>
<dbReference type="PROSITE" id="PS50834">
    <property type="entry name" value="HIN_200"/>
    <property type="match status" value="1"/>
</dbReference>
<evidence type="ECO:0000250" key="1"/>
<evidence type="ECO:0000255" key="2"/>
<evidence type="ECO:0000255" key="3">
    <source>
        <dbReference type="PROSITE-ProRule" id="PRU00061"/>
    </source>
</evidence>
<evidence type="ECO:0000255" key="4">
    <source>
        <dbReference type="PROSITE-ProRule" id="PRU00106"/>
    </source>
</evidence>
<evidence type="ECO:0000256" key="5">
    <source>
        <dbReference type="SAM" id="MobiDB-lite"/>
    </source>
</evidence>
<gene>
    <name type="primary">MNDA</name>
    <name type="ORF">QnpA-13106</name>
</gene>
<proteinExistence type="evidence at transcript level"/>
<comment type="function">
    <text evidence="1">May act as a transcriptional activator/repressor in the myeloid lineage. Plays a role in the granulocyte/monocyte cell-specific response to interferon. Stimulates the DNA binding of the transcriptional repressor protein YY1 (By similarity).</text>
</comment>
<comment type="subunit">
    <text evidence="1">Participates in a ternary complex with YY1 and the YY1 target DNA element. Binds nucleolin and nucleophosmin/NPM/B23 (By similarity).</text>
</comment>
<comment type="subcellular location">
    <subcellularLocation>
        <location evidence="1">Nucleus</location>
    </subcellularLocation>
    <subcellularLocation>
        <location evidence="1">Cytoplasm</location>
    </subcellularLocation>
    <text evidence="1">Uniformly distributed throughout the interphase cell nucleus. Associates with chromatin (By similarity).</text>
</comment>
<comment type="domain">
    <text evidence="1">Its N-terminal half (200 amino acids) is sufficient for maximum enhancement of YY1 DNA binding and a portion of this sequence is responsible for binding YY1.</text>
</comment>
<protein>
    <recommendedName>
        <fullName>Myeloid cell nuclear differentiation antigen</fullName>
    </recommendedName>
</protein>
<reference key="1">
    <citation type="journal article" date="2002" name="Genomics">
        <title>Search for genes positively selected during primate evolution by 5'-end-sequence screening of cynomolgus monkey cDNAs.</title>
        <authorList>
            <person name="Osada N."/>
            <person name="Kusuda J."/>
            <person name="Hirata M."/>
            <person name="Tanuma R."/>
            <person name="Hida M."/>
            <person name="Sugano S."/>
            <person name="Hirai M."/>
            <person name="Hashimoto K."/>
        </authorList>
    </citation>
    <scope>NUCLEOTIDE SEQUENCE [LARGE SCALE MRNA]</scope>
    <source>
        <tissue>Parietal cortex</tissue>
    </source>
</reference>
<feature type="chain" id="PRO_0000153725" description="Myeloid cell nuclear differentiation antigen">
    <location>
        <begin position="1"/>
        <end position="407"/>
    </location>
</feature>
<feature type="domain" description="Pyrin" evidence="3">
    <location>
        <begin position="1"/>
        <end position="88"/>
    </location>
</feature>
<feature type="domain" description="HIN-200" evidence="4">
    <location>
        <begin position="196"/>
        <end position="394"/>
    </location>
</feature>
<feature type="region of interest" description="Disordered" evidence="5">
    <location>
        <begin position="122"/>
        <end position="211"/>
    </location>
</feature>
<feature type="short sequence motif" description="Nuclear localization signal" evidence="2">
    <location>
        <begin position="131"/>
        <end position="137"/>
    </location>
</feature>
<feature type="compositionally biased region" description="Low complexity" evidence="5">
    <location>
        <begin position="177"/>
        <end position="199"/>
    </location>
</feature>
<organism>
    <name type="scientific">Macaca fascicularis</name>
    <name type="common">Crab-eating macaque</name>
    <name type="synonym">Cynomolgus monkey</name>
    <dbReference type="NCBI Taxonomy" id="9541"/>
    <lineage>
        <taxon>Eukaryota</taxon>
        <taxon>Metazoa</taxon>
        <taxon>Chordata</taxon>
        <taxon>Craniata</taxon>
        <taxon>Vertebrata</taxon>
        <taxon>Euteleostomi</taxon>
        <taxon>Mammalia</taxon>
        <taxon>Eutheria</taxon>
        <taxon>Euarchontoglires</taxon>
        <taxon>Primates</taxon>
        <taxon>Haplorrhini</taxon>
        <taxon>Catarrhini</taxon>
        <taxon>Cercopithecidae</taxon>
        <taxon>Cercopithecinae</taxon>
        <taxon>Macaca</taxon>
    </lineage>
</organism>
<keyword id="KW-0010">Activator</keyword>
<keyword id="KW-0963">Cytoplasm</keyword>
<keyword id="KW-0238">DNA-binding</keyword>
<keyword id="KW-0539">Nucleus</keyword>
<keyword id="KW-1185">Reference proteome</keyword>
<keyword id="KW-0678">Repressor</keyword>
<keyword id="KW-0804">Transcription</keyword>
<keyword id="KW-0805">Transcription regulation</keyword>
<name>MNDA_MACFA</name>